<accession>Q47RF2</accession>
<gene>
    <name evidence="1" type="primary">pyrD</name>
    <name type="ordered locus">Tfu_0927</name>
</gene>
<reference key="1">
    <citation type="journal article" date="2007" name="J. Bacteriol.">
        <title>Genome sequence and analysis of the soil cellulolytic actinomycete Thermobifida fusca YX.</title>
        <authorList>
            <person name="Lykidis A."/>
            <person name="Mavromatis K."/>
            <person name="Ivanova N."/>
            <person name="Anderson I."/>
            <person name="Land M."/>
            <person name="DiBartolo G."/>
            <person name="Martinez M."/>
            <person name="Lapidus A."/>
            <person name="Lucas S."/>
            <person name="Copeland A."/>
            <person name="Richardson P."/>
            <person name="Wilson D.B."/>
            <person name="Kyrpides N."/>
        </authorList>
    </citation>
    <scope>NUCLEOTIDE SEQUENCE [LARGE SCALE GENOMIC DNA]</scope>
    <source>
        <strain>YX</strain>
    </source>
</reference>
<sequence length="377" mass="40397">MLYQFIFHTLLRRVDAERAHRVSFAGLRALAAVPGTTRLMRRVLGPREPELRVRVFGREFPGPLGLAAGFDKNARGVAALTALGFSHVEIGTVTGQPQPGNPRPRLFRLVADRAIVNRMGFNNEGSQAVSERLRAHRARRARDLIVGVNIGKTKVVPDSDAVADYVTSARRFADLADYLVVNVSSPNTPGLRDLQATERLRPLLSAVRRTLDEAGRPDLPLLVKIAPDLADEDIDAVADLAVELGLDGIIATNTTVSRDGLATDPEEVAALGAGGLSGAPLKERALQVLRRLRARVGDRLVLIAVGGIETPEDAWARIRAGATLVQGYTGLIYGGPLWPRRIHRGVAALARRDGFASIAEAVGVDVDPSAKPSTASS</sequence>
<dbReference type="EC" id="1.3.5.2" evidence="1"/>
<dbReference type="EMBL" id="CP000088">
    <property type="protein sequence ID" value="AAZ54965.1"/>
    <property type="molecule type" value="Genomic_DNA"/>
</dbReference>
<dbReference type="RefSeq" id="WP_011291374.1">
    <property type="nucleotide sequence ID" value="NC_007333.1"/>
</dbReference>
<dbReference type="SMR" id="Q47RF2"/>
<dbReference type="STRING" id="269800.Tfu_0927"/>
<dbReference type="KEGG" id="tfu:Tfu_0927"/>
<dbReference type="eggNOG" id="COG0167">
    <property type="taxonomic scope" value="Bacteria"/>
</dbReference>
<dbReference type="HOGENOM" id="CLU_013640_2_0_11"/>
<dbReference type="OrthoDB" id="9802377at2"/>
<dbReference type="UniPathway" id="UPA00070">
    <property type="reaction ID" value="UER00946"/>
</dbReference>
<dbReference type="GO" id="GO:0005737">
    <property type="term" value="C:cytoplasm"/>
    <property type="evidence" value="ECO:0007669"/>
    <property type="project" value="InterPro"/>
</dbReference>
<dbReference type="GO" id="GO:0005886">
    <property type="term" value="C:plasma membrane"/>
    <property type="evidence" value="ECO:0007669"/>
    <property type="project" value="UniProtKB-SubCell"/>
</dbReference>
<dbReference type="GO" id="GO:0106430">
    <property type="term" value="F:dihydroorotate dehydrogenase (quinone) activity"/>
    <property type="evidence" value="ECO:0007669"/>
    <property type="project" value="UniProtKB-EC"/>
</dbReference>
<dbReference type="GO" id="GO:0006207">
    <property type="term" value="P:'de novo' pyrimidine nucleobase biosynthetic process"/>
    <property type="evidence" value="ECO:0007669"/>
    <property type="project" value="InterPro"/>
</dbReference>
<dbReference type="GO" id="GO:0044205">
    <property type="term" value="P:'de novo' UMP biosynthetic process"/>
    <property type="evidence" value="ECO:0007669"/>
    <property type="project" value="UniProtKB-UniRule"/>
</dbReference>
<dbReference type="CDD" id="cd04738">
    <property type="entry name" value="DHOD_2_like"/>
    <property type="match status" value="1"/>
</dbReference>
<dbReference type="FunFam" id="3.20.20.70:FF:000123">
    <property type="entry name" value="Dihydroorotate dehydrogenase (quinone)"/>
    <property type="match status" value="1"/>
</dbReference>
<dbReference type="Gene3D" id="3.20.20.70">
    <property type="entry name" value="Aldolase class I"/>
    <property type="match status" value="1"/>
</dbReference>
<dbReference type="HAMAP" id="MF_00225">
    <property type="entry name" value="DHO_dh_type2"/>
    <property type="match status" value="1"/>
</dbReference>
<dbReference type="InterPro" id="IPR013785">
    <property type="entry name" value="Aldolase_TIM"/>
</dbReference>
<dbReference type="InterPro" id="IPR050074">
    <property type="entry name" value="DHO_dehydrogenase"/>
</dbReference>
<dbReference type="InterPro" id="IPR005719">
    <property type="entry name" value="Dihydroorotate_DH_2"/>
</dbReference>
<dbReference type="InterPro" id="IPR005720">
    <property type="entry name" value="Dihydroorotate_DH_cat"/>
</dbReference>
<dbReference type="InterPro" id="IPR001295">
    <property type="entry name" value="Dihydroorotate_DH_CS"/>
</dbReference>
<dbReference type="NCBIfam" id="NF003645">
    <property type="entry name" value="PRK05286.1-2"/>
    <property type="match status" value="1"/>
</dbReference>
<dbReference type="NCBIfam" id="NF003648">
    <property type="entry name" value="PRK05286.2-1"/>
    <property type="match status" value="1"/>
</dbReference>
<dbReference type="NCBIfam" id="NF003652">
    <property type="entry name" value="PRK05286.2-5"/>
    <property type="match status" value="1"/>
</dbReference>
<dbReference type="NCBIfam" id="TIGR01036">
    <property type="entry name" value="pyrD_sub2"/>
    <property type="match status" value="1"/>
</dbReference>
<dbReference type="PANTHER" id="PTHR48109:SF4">
    <property type="entry name" value="DIHYDROOROTATE DEHYDROGENASE (QUINONE), MITOCHONDRIAL"/>
    <property type="match status" value="1"/>
</dbReference>
<dbReference type="PANTHER" id="PTHR48109">
    <property type="entry name" value="DIHYDROOROTATE DEHYDROGENASE (QUINONE), MITOCHONDRIAL-RELATED"/>
    <property type="match status" value="1"/>
</dbReference>
<dbReference type="Pfam" id="PF01180">
    <property type="entry name" value="DHO_dh"/>
    <property type="match status" value="1"/>
</dbReference>
<dbReference type="SUPFAM" id="SSF51395">
    <property type="entry name" value="FMN-linked oxidoreductases"/>
    <property type="match status" value="1"/>
</dbReference>
<dbReference type="PROSITE" id="PS00911">
    <property type="entry name" value="DHODEHASE_1"/>
    <property type="match status" value="1"/>
</dbReference>
<dbReference type="PROSITE" id="PS00912">
    <property type="entry name" value="DHODEHASE_2"/>
    <property type="match status" value="1"/>
</dbReference>
<comment type="function">
    <text evidence="1">Catalyzes the conversion of dihydroorotate to orotate with quinone as electron acceptor.</text>
</comment>
<comment type="catalytic activity">
    <reaction evidence="1">
        <text>(S)-dihydroorotate + a quinone = orotate + a quinol</text>
        <dbReference type="Rhea" id="RHEA:30187"/>
        <dbReference type="ChEBI" id="CHEBI:24646"/>
        <dbReference type="ChEBI" id="CHEBI:30839"/>
        <dbReference type="ChEBI" id="CHEBI:30864"/>
        <dbReference type="ChEBI" id="CHEBI:132124"/>
        <dbReference type="EC" id="1.3.5.2"/>
    </reaction>
</comment>
<comment type="cofactor">
    <cofactor evidence="1">
        <name>FMN</name>
        <dbReference type="ChEBI" id="CHEBI:58210"/>
    </cofactor>
    <text evidence="1">Binds 1 FMN per subunit.</text>
</comment>
<comment type="pathway">
    <text evidence="1">Pyrimidine metabolism; UMP biosynthesis via de novo pathway; orotate from (S)-dihydroorotate (quinone route): step 1/1.</text>
</comment>
<comment type="subunit">
    <text evidence="1">Monomer.</text>
</comment>
<comment type="subcellular location">
    <subcellularLocation>
        <location evidence="1">Cell membrane</location>
        <topology evidence="1">Peripheral membrane protein</topology>
    </subcellularLocation>
</comment>
<comment type="similarity">
    <text evidence="1">Belongs to the dihydroorotate dehydrogenase family. Type 2 subfamily.</text>
</comment>
<feature type="chain" id="PRO_0000336495" description="Dihydroorotate dehydrogenase (quinone)">
    <location>
        <begin position="1"/>
        <end position="377"/>
    </location>
</feature>
<feature type="active site" description="Nucleophile" evidence="1">
    <location>
        <position position="185"/>
    </location>
</feature>
<feature type="binding site" evidence="1">
    <location>
        <begin position="68"/>
        <end position="72"/>
    </location>
    <ligand>
        <name>FMN</name>
        <dbReference type="ChEBI" id="CHEBI:58210"/>
    </ligand>
</feature>
<feature type="binding site" evidence="1">
    <location>
        <position position="72"/>
    </location>
    <ligand>
        <name>substrate</name>
    </ligand>
</feature>
<feature type="binding site" evidence="1">
    <location>
        <position position="92"/>
    </location>
    <ligand>
        <name>FMN</name>
        <dbReference type="ChEBI" id="CHEBI:58210"/>
    </ligand>
</feature>
<feature type="binding site" evidence="1">
    <location>
        <begin position="117"/>
        <end position="121"/>
    </location>
    <ligand>
        <name>substrate</name>
    </ligand>
</feature>
<feature type="binding site" evidence="1">
    <location>
        <position position="149"/>
    </location>
    <ligand>
        <name>FMN</name>
        <dbReference type="ChEBI" id="CHEBI:58210"/>
    </ligand>
</feature>
<feature type="binding site" evidence="1">
    <location>
        <position position="182"/>
    </location>
    <ligand>
        <name>FMN</name>
        <dbReference type="ChEBI" id="CHEBI:58210"/>
    </ligand>
</feature>
<feature type="binding site" evidence="1">
    <location>
        <position position="182"/>
    </location>
    <ligand>
        <name>substrate</name>
    </ligand>
</feature>
<feature type="binding site" evidence="1">
    <location>
        <position position="187"/>
    </location>
    <ligand>
        <name>substrate</name>
    </ligand>
</feature>
<feature type="binding site" evidence="1">
    <location>
        <position position="224"/>
    </location>
    <ligand>
        <name>FMN</name>
        <dbReference type="ChEBI" id="CHEBI:58210"/>
    </ligand>
</feature>
<feature type="binding site" evidence="1">
    <location>
        <position position="252"/>
    </location>
    <ligand>
        <name>FMN</name>
        <dbReference type="ChEBI" id="CHEBI:58210"/>
    </ligand>
</feature>
<feature type="binding site" evidence="1">
    <location>
        <begin position="253"/>
        <end position="254"/>
    </location>
    <ligand>
        <name>substrate</name>
    </ligand>
</feature>
<feature type="binding site" evidence="1">
    <location>
        <position position="278"/>
    </location>
    <ligand>
        <name>FMN</name>
        <dbReference type="ChEBI" id="CHEBI:58210"/>
    </ligand>
</feature>
<feature type="binding site" evidence="1">
    <location>
        <position position="307"/>
    </location>
    <ligand>
        <name>FMN</name>
        <dbReference type="ChEBI" id="CHEBI:58210"/>
    </ligand>
</feature>
<feature type="binding site" evidence="1">
    <location>
        <begin position="328"/>
        <end position="329"/>
    </location>
    <ligand>
        <name>FMN</name>
        <dbReference type="ChEBI" id="CHEBI:58210"/>
    </ligand>
</feature>
<organism>
    <name type="scientific">Thermobifida fusca (strain YX)</name>
    <dbReference type="NCBI Taxonomy" id="269800"/>
    <lineage>
        <taxon>Bacteria</taxon>
        <taxon>Bacillati</taxon>
        <taxon>Actinomycetota</taxon>
        <taxon>Actinomycetes</taxon>
        <taxon>Streptosporangiales</taxon>
        <taxon>Nocardiopsidaceae</taxon>
        <taxon>Thermobifida</taxon>
    </lineage>
</organism>
<keyword id="KW-1003">Cell membrane</keyword>
<keyword id="KW-0285">Flavoprotein</keyword>
<keyword id="KW-0288">FMN</keyword>
<keyword id="KW-0472">Membrane</keyword>
<keyword id="KW-0560">Oxidoreductase</keyword>
<keyword id="KW-0665">Pyrimidine biosynthesis</keyword>
<proteinExistence type="inferred from homology"/>
<name>PYRD_THEFY</name>
<protein>
    <recommendedName>
        <fullName evidence="1">Dihydroorotate dehydrogenase (quinone)</fullName>
        <ecNumber evidence="1">1.3.5.2</ecNumber>
    </recommendedName>
    <alternativeName>
        <fullName evidence="1">DHOdehase</fullName>
        <shortName evidence="1">DHOD</shortName>
        <shortName evidence="1">DHODase</shortName>
    </alternativeName>
    <alternativeName>
        <fullName evidence="1">Dihydroorotate oxidase</fullName>
    </alternativeName>
</protein>
<evidence type="ECO:0000255" key="1">
    <source>
        <dbReference type="HAMAP-Rule" id="MF_00225"/>
    </source>
</evidence>